<keyword id="KW-0025">Alternative splicing</keyword>
<keyword id="KW-0238">DNA-binding</keyword>
<keyword id="KW-0479">Metal-binding</keyword>
<keyword id="KW-0539">Nucleus</keyword>
<keyword id="KW-1267">Proteomics identification</keyword>
<keyword id="KW-1185">Reference proteome</keyword>
<keyword id="KW-0677">Repeat</keyword>
<keyword id="KW-0804">Transcription</keyword>
<keyword id="KW-0805">Transcription regulation</keyword>
<keyword id="KW-0862">Zinc</keyword>
<keyword id="KW-0863">Zinc-finger</keyword>
<gene>
    <name type="primary">ZNF19</name>
    <name type="synonym">KOX12</name>
</gene>
<name>ZNF19_HUMAN</name>
<proteinExistence type="evidence at protein level"/>
<evidence type="ECO:0000255" key="1">
    <source>
        <dbReference type="PROSITE-ProRule" id="PRU00042"/>
    </source>
</evidence>
<evidence type="ECO:0000255" key="2">
    <source>
        <dbReference type="PROSITE-ProRule" id="PRU00119"/>
    </source>
</evidence>
<evidence type="ECO:0000269" key="3">
    <source>
    </source>
</evidence>
<evidence type="ECO:0000269" key="4">
    <source>
    </source>
</evidence>
<evidence type="ECO:0000269" key="5">
    <source>
    </source>
</evidence>
<evidence type="ECO:0000303" key="6">
    <source>
    </source>
</evidence>
<evidence type="ECO:0000305" key="7"/>
<organism>
    <name type="scientific">Homo sapiens</name>
    <name type="common">Human</name>
    <dbReference type="NCBI Taxonomy" id="9606"/>
    <lineage>
        <taxon>Eukaryota</taxon>
        <taxon>Metazoa</taxon>
        <taxon>Chordata</taxon>
        <taxon>Craniata</taxon>
        <taxon>Vertebrata</taxon>
        <taxon>Euteleostomi</taxon>
        <taxon>Mammalia</taxon>
        <taxon>Eutheria</taxon>
        <taxon>Euarchontoglires</taxon>
        <taxon>Primates</taxon>
        <taxon>Haplorrhini</taxon>
        <taxon>Catarrhini</taxon>
        <taxon>Hominidae</taxon>
        <taxon>Homo</taxon>
    </lineage>
</organism>
<reference key="1">
    <citation type="journal article" date="2004" name="Nat. Genet.">
        <title>Complete sequencing and characterization of 21,243 full-length human cDNAs.</title>
        <authorList>
            <person name="Ota T."/>
            <person name="Suzuki Y."/>
            <person name="Nishikawa T."/>
            <person name="Otsuki T."/>
            <person name="Sugiyama T."/>
            <person name="Irie R."/>
            <person name="Wakamatsu A."/>
            <person name="Hayashi K."/>
            <person name="Sato H."/>
            <person name="Nagai K."/>
            <person name="Kimura K."/>
            <person name="Makita H."/>
            <person name="Sekine M."/>
            <person name="Obayashi M."/>
            <person name="Nishi T."/>
            <person name="Shibahara T."/>
            <person name="Tanaka T."/>
            <person name="Ishii S."/>
            <person name="Yamamoto J."/>
            <person name="Saito K."/>
            <person name="Kawai Y."/>
            <person name="Isono Y."/>
            <person name="Nakamura Y."/>
            <person name="Nagahari K."/>
            <person name="Murakami K."/>
            <person name="Yasuda T."/>
            <person name="Iwayanagi T."/>
            <person name="Wagatsuma M."/>
            <person name="Shiratori A."/>
            <person name="Sudo H."/>
            <person name="Hosoiri T."/>
            <person name="Kaku Y."/>
            <person name="Kodaira H."/>
            <person name="Kondo H."/>
            <person name="Sugawara M."/>
            <person name="Takahashi M."/>
            <person name="Kanda K."/>
            <person name="Yokoi T."/>
            <person name="Furuya T."/>
            <person name="Kikkawa E."/>
            <person name="Omura Y."/>
            <person name="Abe K."/>
            <person name="Kamihara K."/>
            <person name="Katsuta N."/>
            <person name="Sato K."/>
            <person name="Tanikawa M."/>
            <person name="Yamazaki M."/>
            <person name="Ninomiya K."/>
            <person name="Ishibashi T."/>
            <person name="Yamashita H."/>
            <person name="Murakawa K."/>
            <person name="Fujimori K."/>
            <person name="Tanai H."/>
            <person name="Kimata M."/>
            <person name="Watanabe M."/>
            <person name="Hiraoka S."/>
            <person name="Chiba Y."/>
            <person name="Ishida S."/>
            <person name="Ono Y."/>
            <person name="Takiguchi S."/>
            <person name="Watanabe S."/>
            <person name="Yosida M."/>
            <person name="Hotuta T."/>
            <person name="Kusano J."/>
            <person name="Kanehori K."/>
            <person name="Takahashi-Fujii A."/>
            <person name="Hara H."/>
            <person name="Tanase T.-O."/>
            <person name="Nomura Y."/>
            <person name="Togiya S."/>
            <person name="Komai F."/>
            <person name="Hara R."/>
            <person name="Takeuchi K."/>
            <person name="Arita M."/>
            <person name="Imose N."/>
            <person name="Musashino K."/>
            <person name="Yuuki H."/>
            <person name="Oshima A."/>
            <person name="Sasaki N."/>
            <person name="Aotsuka S."/>
            <person name="Yoshikawa Y."/>
            <person name="Matsunawa H."/>
            <person name="Ichihara T."/>
            <person name="Shiohata N."/>
            <person name="Sano S."/>
            <person name="Moriya S."/>
            <person name="Momiyama H."/>
            <person name="Satoh N."/>
            <person name="Takami S."/>
            <person name="Terashima Y."/>
            <person name="Suzuki O."/>
            <person name="Nakagawa S."/>
            <person name="Senoh A."/>
            <person name="Mizoguchi H."/>
            <person name="Goto Y."/>
            <person name="Shimizu F."/>
            <person name="Wakebe H."/>
            <person name="Hishigaki H."/>
            <person name="Watanabe T."/>
            <person name="Sugiyama A."/>
            <person name="Takemoto M."/>
            <person name="Kawakami B."/>
            <person name="Yamazaki M."/>
            <person name="Watanabe K."/>
            <person name="Kumagai A."/>
            <person name="Itakura S."/>
            <person name="Fukuzumi Y."/>
            <person name="Fujimori Y."/>
            <person name="Komiyama M."/>
            <person name="Tashiro H."/>
            <person name="Tanigami A."/>
            <person name="Fujiwara T."/>
            <person name="Ono T."/>
            <person name="Yamada K."/>
            <person name="Fujii Y."/>
            <person name="Ozaki K."/>
            <person name="Hirao M."/>
            <person name="Ohmori Y."/>
            <person name="Kawabata A."/>
            <person name="Hikiji T."/>
            <person name="Kobatake N."/>
            <person name="Inagaki H."/>
            <person name="Ikema Y."/>
            <person name="Okamoto S."/>
            <person name="Okitani R."/>
            <person name="Kawakami T."/>
            <person name="Noguchi S."/>
            <person name="Itoh T."/>
            <person name="Shigeta K."/>
            <person name="Senba T."/>
            <person name="Matsumura K."/>
            <person name="Nakajima Y."/>
            <person name="Mizuno T."/>
            <person name="Morinaga M."/>
            <person name="Sasaki M."/>
            <person name="Togashi T."/>
            <person name="Oyama M."/>
            <person name="Hata H."/>
            <person name="Watanabe M."/>
            <person name="Komatsu T."/>
            <person name="Mizushima-Sugano J."/>
            <person name="Satoh T."/>
            <person name="Shirai Y."/>
            <person name="Takahashi Y."/>
            <person name="Nakagawa K."/>
            <person name="Okumura K."/>
            <person name="Nagase T."/>
            <person name="Nomura N."/>
            <person name="Kikuchi H."/>
            <person name="Masuho Y."/>
            <person name="Yamashita R."/>
            <person name="Nakai K."/>
            <person name="Yada T."/>
            <person name="Nakamura Y."/>
            <person name="Ohara O."/>
            <person name="Isogai T."/>
            <person name="Sugano S."/>
        </authorList>
    </citation>
    <scope>NUCLEOTIDE SEQUENCE [LARGE SCALE MRNA] (ISOFORMS 1 AND 2)</scope>
    <scope>VARIANTS HIS-218 AND GLN-224</scope>
    <source>
        <tissue>Lung</tissue>
        <tissue>Testis</tissue>
    </source>
</reference>
<reference key="2">
    <citation type="journal article" date="2004" name="Nature">
        <title>The sequence and analysis of duplication-rich human chromosome 16.</title>
        <authorList>
            <person name="Martin J."/>
            <person name="Han C."/>
            <person name="Gordon L.A."/>
            <person name="Terry A."/>
            <person name="Prabhakar S."/>
            <person name="She X."/>
            <person name="Xie G."/>
            <person name="Hellsten U."/>
            <person name="Chan Y.M."/>
            <person name="Altherr M."/>
            <person name="Couronne O."/>
            <person name="Aerts A."/>
            <person name="Bajorek E."/>
            <person name="Black S."/>
            <person name="Blumer H."/>
            <person name="Branscomb E."/>
            <person name="Brown N.C."/>
            <person name="Bruno W.J."/>
            <person name="Buckingham J.M."/>
            <person name="Callen D.F."/>
            <person name="Campbell C.S."/>
            <person name="Campbell M.L."/>
            <person name="Campbell E.W."/>
            <person name="Caoile C."/>
            <person name="Challacombe J.F."/>
            <person name="Chasteen L.A."/>
            <person name="Chertkov O."/>
            <person name="Chi H.C."/>
            <person name="Christensen M."/>
            <person name="Clark L.M."/>
            <person name="Cohn J.D."/>
            <person name="Denys M."/>
            <person name="Detter J.C."/>
            <person name="Dickson M."/>
            <person name="Dimitrijevic-Bussod M."/>
            <person name="Escobar J."/>
            <person name="Fawcett J.J."/>
            <person name="Flowers D."/>
            <person name="Fotopulos D."/>
            <person name="Glavina T."/>
            <person name="Gomez M."/>
            <person name="Gonzales E."/>
            <person name="Goodstein D."/>
            <person name="Goodwin L.A."/>
            <person name="Grady D.L."/>
            <person name="Grigoriev I."/>
            <person name="Groza M."/>
            <person name="Hammon N."/>
            <person name="Hawkins T."/>
            <person name="Haydu L."/>
            <person name="Hildebrand C.E."/>
            <person name="Huang W."/>
            <person name="Israni S."/>
            <person name="Jett J."/>
            <person name="Jewett P.B."/>
            <person name="Kadner K."/>
            <person name="Kimball H."/>
            <person name="Kobayashi A."/>
            <person name="Krawczyk M.-C."/>
            <person name="Leyba T."/>
            <person name="Longmire J.L."/>
            <person name="Lopez F."/>
            <person name="Lou Y."/>
            <person name="Lowry S."/>
            <person name="Ludeman T."/>
            <person name="Manohar C.F."/>
            <person name="Mark G.A."/>
            <person name="McMurray K.L."/>
            <person name="Meincke L.J."/>
            <person name="Morgan J."/>
            <person name="Moyzis R.K."/>
            <person name="Mundt M.O."/>
            <person name="Munk A.C."/>
            <person name="Nandkeshwar R.D."/>
            <person name="Pitluck S."/>
            <person name="Pollard M."/>
            <person name="Predki P."/>
            <person name="Parson-Quintana B."/>
            <person name="Ramirez L."/>
            <person name="Rash S."/>
            <person name="Retterer J."/>
            <person name="Ricke D.O."/>
            <person name="Robinson D.L."/>
            <person name="Rodriguez A."/>
            <person name="Salamov A."/>
            <person name="Saunders E.H."/>
            <person name="Scott D."/>
            <person name="Shough T."/>
            <person name="Stallings R.L."/>
            <person name="Stalvey M."/>
            <person name="Sutherland R.D."/>
            <person name="Tapia R."/>
            <person name="Tesmer J.G."/>
            <person name="Thayer N."/>
            <person name="Thompson L.S."/>
            <person name="Tice H."/>
            <person name="Torney D.C."/>
            <person name="Tran-Gyamfi M."/>
            <person name="Tsai M."/>
            <person name="Ulanovsky L.E."/>
            <person name="Ustaszewska A."/>
            <person name="Vo N."/>
            <person name="White P.S."/>
            <person name="Williams A.L."/>
            <person name="Wills P.L."/>
            <person name="Wu J.-R."/>
            <person name="Wu K."/>
            <person name="Yang J."/>
            <person name="DeJong P."/>
            <person name="Bruce D."/>
            <person name="Doggett N.A."/>
            <person name="Deaven L."/>
            <person name="Schmutz J."/>
            <person name="Grimwood J."/>
            <person name="Richardson P."/>
            <person name="Rokhsar D.S."/>
            <person name="Eichler E.E."/>
            <person name="Gilna P."/>
            <person name="Lucas S.M."/>
            <person name="Myers R.M."/>
            <person name="Rubin E.M."/>
            <person name="Pennacchio L.A."/>
        </authorList>
    </citation>
    <scope>NUCLEOTIDE SEQUENCE [LARGE SCALE GENOMIC DNA]</scope>
</reference>
<reference key="3">
    <citation type="journal article" date="2004" name="Genome Res.">
        <title>The status, quality, and expansion of the NIH full-length cDNA project: the Mammalian Gene Collection (MGC).</title>
        <authorList>
            <consortium name="The MGC Project Team"/>
        </authorList>
    </citation>
    <scope>NUCLEOTIDE SEQUENCE [LARGE SCALE MRNA] (ISOFORM 1)</scope>
    <scope>VARIANT HIS-218</scope>
    <source>
        <tissue>Testis</tissue>
    </source>
</reference>
<reference key="4">
    <citation type="journal article" date="2007" name="BMC Genomics">
        <title>The full-ORF clone resource of the German cDNA consortium.</title>
        <authorList>
            <person name="Bechtel S."/>
            <person name="Rosenfelder H."/>
            <person name="Duda A."/>
            <person name="Schmidt C.P."/>
            <person name="Ernst U."/>
            <person name="Wellenreuther R."/>
            <person name="Mehrle A."/>
            <person name="Schuster C."/>
            <person name="Bahr A."/>
            <person name="Bloecker H."/>
            <person name="Heubner D."/>
            <person name="Hoerlein A."/>
            <person name="Michel G."/>
            <person name="Wedler H."/>
            <person name="Koehrer K."/>
            <person name="Ottenwaelder B."/>
            <person name="Poustka A."/>
            <person name="Wiemann S."/>
            <person name="Schupp I."/>
        </authorList>
    </citation>
    <scope>NUCLEOTIDE SEQUENCE [LARGE SCALE MRNA] OF 120-458 (ISOFORMS 1/2)</scope>
    <scope>VARIANT HIS-218</scope>
    <source>
        <tissue>Brain</tissue>
    </source>
</reference>
<reference key="5">
    <citation type="journal article" date="1991" name="Proc. Natl. Acad. Sci. U.S.A.">
        <title>Characterization and mapping of human genes encoding zinc finger proteins.</title>
        <authorList>
            <person name="Bray P.L."/>
            <person name="Lichter P."/>
            <person name="Thiesen H.-J."/>
            <person name="Ward D.C."/>
            <person name="Dawid I.B."/>
        </authorList>
    </citation>
    <scope>NUCLEOTIDE SEQUENCE [GENOMIC DNA] OF 270-334 (ISOFORMS 1/2)</scope>
    <source>
        <tissue>Placenta</tissue>
    </source>
</reference>
<reference key="6">
    <citation type="journal article" date="1990" name="New Biol.">
        <title>Multiple genes encoding zinc finger domains are expressed in human T cells.</title>
        <authorList>
            <person name="Thiesen H.-J."/>
        </authorList>
    </citation>
    <scope>NUCLEOTIDE SEQUENCE [MRNA] OF 273-328 (ISOFORMS 1/2)</scope>
    <source>
        <tissue>Lymphoid tissue</tissue>
    </source>
</reference>
<accession>P17023</accession>
<accession>A8K895</accession>
<accession>Q86Y66</accession>
<accession>Q8NDE2</accession>
<accession>Q96M79</accession>
<accession>Q96NE5</accession>
<feature type="chain" id="PRO_0000047343" description="Zinc finger protein 19">
    <location>
        <begin position="1"/>
        <end position="458"/>
    </location>
</feature>
<feature type="domain" description="KRAB" evidence="2">
    <location>
        <begin position="14"/>
        <end position="85"/>
    </location>
</feature>
<feature type="zinc finger region" description="C2H2-type 1" evidence="1">
    <location>
        <begin position="161"/>
        <end position="183"/>
    </location>
</feature>
<feature type="zinc finger region" description="C2H2-type 2" evidence="1">
    <location>
        <begin position="189"/>
        <end position="211"/>
    </location>
</feature>
<feature type="zinc finger region" description="C2H2-type 3" evidence="1">
    <location>
        <begin position="217"/>
        <end position="239"/>
    </location>
</feature>
<feature type="zinc finger region" description="C2H2-type 4" evidence="1">
    <location>
        <begin position="245"/>
        <end position="267"/>
    </location>
</feature>
<feature type="zinc finger region" description="C2H2-type 5" evidence="1">
    <location>
        <begin position="273"/>
        <end position="295"/>
    </location>
</feature>
<feature type="zinc finger region" description="C2H2-type 6" evidence="1">
    <location>
        <begin position="301"/>
        <end position="323"/>
    </location>
</feature>
<feature type="zinc finger region" description="C2H2-type 7" evidence="1">
    <location>
        <begin position="329"/>
        <end position="351"/>
    </location>
</feature>
<feature type="zinc finger region" description="C2H2-type 8" evidence="1">
    <location>
        <begin position="357"/>
        <end position="379"/>
    </location>
</feature>
<feature type="zinc finger region" description="C2H2-type 9" evidence="1">
    <location>
        <begin position="385"/>
        <end position="407"/>
    </location>
</feature>
<feature type="zinc finger region" description="C2H2-type 10; atypical" evidence="1">
    <location>
        <begin position="413"/>
        <end position="433"/>
    </location>
</feature>
<feature type="splice variant" id="VSP_036733" description="In isoform 2." evidence="6">
    <location>
        <begin position="1"/>
        <end position="12"/>
    </location>
</feature>
<feature type="sequence variant" id="VAR_054792" description="In dbSNP:rs8050871." evidence="3 4 5">
    <original>Q</original>
    <variation>H</variation>
    <location>
        <position position="218"/>
    </location>
</feature>
<feature type="sequence variant" id="VAR_054793" description="In dbSNP:rs10500557." evidence="3">
    <original>R</original>
    <variation>Q</variation>
    <location>
        <position position="224"/>
    </location>
</feature>
<feature type="sequence conflict" description="In Ref. 3; AAH47091." evidence="7" ref="3">
    <original>A</original>
    <variation>V</variation>
    <location>
        <position position="34"/>
    </location>
</feature>
<feature type="sequence conflict" description="In Ref. 4; CAD38915." evidence="7" ref="4">
    <original>L</original>
    <variation>V</variation>
    <location>
        <position position="120"/>
    </location>
</feature>
<dbReference type="EMBL" id="AK055567">
    <property type="protein sequence ID" value="BAB70957.1"/>
    <property type="molecule type" value="mRNA"/>
</dbReference>
<dbReference type="EMBL" id="AK057330">
    <property type="protein sequence ID" value="BAB71430.1"/>
    <property type="molecule type" value="mRNA"/>
</dbReference>
<dbReference type="EMBL" id="AK292260">
    <property type="protein sequence ID" value="BAF84949.1"/>
    <property type="molecule type" value="mRNA"/>
</dbReference>
<dbReference type="EMBL" id="AC010547">
    <property type="status" value="NOT_ANNOTATED_CDS"/>
    <property type="molecule type" value="Genomic_DNA"/>
</dbReference>
<dbReference type="EMBL" id="BC047091">
    <property type="protein sequence ID" value="AAH47091.1"/>
    <property type="molecule type" value="mRNA"/>
</dbReference>
<dbReference type="EMBL" id="AL834237">
    <property type="protein sequence ID" value="CAD38915.1"/>
    <property type="molecule type" value="mRNA"/>
</dbReference>
<dbReference type="EMBL" id="M77171">
    <property type="protein sequence ID" value="AAA36814.1"/>
    <property type="status" value="ALT_INIT"/>
    <property type="molecule type" value="Genomic_DNA"/>
</dbReference>
<dbReference type="EMBL" id="X52343">
    <property type="protein sequence ID" value="CAA36569.1"/>
    <property type="molecule type" value="mRNA"/>
</dbReference>
<dbReference type="CCDS" id="CCDS10901.1">
    <molecule id="P17023-1"/>
</dbReference>
<dbReference type="PIR" id="B56409">
    <property type="entry name" value="B56409"/>
</dbReference>
<dbReference type="RefSeq" id="NP_008892.2">
    <molecule id="P17023-1"/>
    <property type="nucleotide sequence ID" value="NM_006961.3"/>
</dbReference>
<dbReference type="SMR" id="P17023"/>
<dbReference type="BioGRID" id="113398">
    <property type="interactions" value="30"/>
</dbReference>
<dbReference type="FunCoup" id="P17023">
    <property type="interactions" value="4"/>
</dbReference>
<dbReference type="IntAct" id="P17023">
    <property type="interactions" value="29"/>
</dbReference>
<dbReference type="STRING" id="9606.ENSP00000288177"/>
<dbReference type="GlyGen" id="P17023">
    <property type="glycosylation" value="1 site, 1 O-linked glycan (1 site)"/>
</dbReference>
<dbReference type="iPTMnet" id="P17023"/>
<dbReference type="PhosphoSitePlus" id="P17023"/>
<dbReference type="BioMuta" id="ZNF19"/>
<dbReference type="DMDM" id="229485313"/>
<dbReference type="jPOST" id="P17023"/>
<dbReference type="MassIVE" id="P17023"/>
<dbReference type="PaxDb" id="9606-ENSP00000288177"/>
<dbReference type="PeptideAtlas" id="P17023"/>
<dbReference type="ProteomicsDB" id="53422">
    <molecule id="P17023-1"/>
</dbReference>
<dbReference type="ProteomicsDB" id="53423">
    <molecule id="P17023-2"/>
</dbReference>
<dbReference type="Antibodypedia" id="16592">
    <property type="antibodies" value="162 antibodies from 21 providers"/>
</dbReference>
<dbReference type="DNASU" id="7567"/>
<dbReference type="Ensembl" id="ENST00000288177.10">
    <molecule id="P17023-1"/>
    <property type="protein sequence ID" value="ENSP00000288177.5"/>
    <property type="gene ID" value="ENSG00000157429.16"/>
</dbReference>
<dbReference type="Ensembl" id="ENST00000564230.5">
    <molecule id="P17023-1"/>
    <property type="protein sequence ID" value="ENSP00000458105.1"/>
    <property type="gene ID" value="ENSG00000157429.16"/>
</dbReference>
<dbReference type="GeneID" id="7567"/>
<dbReference type="KEGG" id="hsa:7567"/>
<dbReference type="MANE-Select" id="ENST00000288177.10">
    <property type="protein sequence ID" value="ENSP00000288177.5"/>
    <property type="RefSeq nucleotide sequence ID" value="NM_006961.4"/>
    <property type="RefSeq protein sequence ID" value="NP_008892.2"/>
</dbReference>
<dbReference type="UCSC" id="uc002fam.2">
    <molecule id="P17023-1"/>
    <property type="organism name" value="human"/>
</dbReference>
<dbReference type="AGR" id="HGNC:12981"/>
<dbReference type="CTD" id="7567"/>
<dbReference type="DisGeNET" id="7567"/>
<dbReference type="GeneCards" id="ZNF19"/>
<dbReference type="HGNC" id="HGNC:12981">
    <property type="gene designation" value="ZNF19"/>
</dbReference>
<dbReference type="HPA" id="ENSG00000157429">
    <property type="expression patterns" value="Low tissue specificity"/>
</dbReference>
<dbReference type="MIM" id="194525">
    <property type="type" value="gene"/>
</dbReference>
<dbReference type="neXtProt" id="NX_P17023"/>
<dbReference type="OpenTargets" id="ENSG00000157429"/>
<dbReference type="PharmGKB" id="PA37562"/>
<dbReference type="VEuPathDB" id="HostDB:ENSG00000157429"/>
<dbReference type="eggNOG" id="KOG1721">
    <property type="taxonomic scope" value="Eukaryota"/>
</dbReference>
<dbReference type="GeneTree" id="ENSGT00940000163278"/>
<dbReference type="HOGENOM" id="CLU_002678_44_0_1"/>
<dbReference type="InParanoid" id="P17023"/>
<dbReference type="OMA" id="MPLNAWH"/>
<dbReference type="OrthoDB" id="6077919at2759"/>
<dbReference type="PAN-GO" id="P17023">
    <property type="GO annotations" value="3 GO annotations based on evolutionary models"/>
</dbReference>
<dbReference type="PhylomeDB" id="P17023"/>
<dbReference type="TreeFam" id="TF350808"/>
<dbReference type="PathwayCommons" id="P17023"/>
<dbReference type="Reactome" id="R-HSA-212436">
    <property type="pathway name" value="Generic Transcription Pathway"/>
</dbReference>
<dbReference type="SignaLink" id="P17023"/>
<dbReference type="BioGRID-ORCS" id="7567">
    <property type="hits" value="9 hits in 1160 CRISPR screens"/>
</dbReference>
<dbReference type="ChiTaRS" id="ZNF19">
    <property type="organism name" value="human"/>
</dbReference>
<dbReference type="GeneWiki" id="ZNF19"/>
<dbReference type="GenomeRNAi" id="7567"/>
<dbReference type="Pharos" id="P17023">
    <property type="development level" value="Tdark"/>
</dbReference>
<dbReference type="PRO" id="PR:P17023"/>
<dbReference type="Proteomes" id="UP000005640">
    <property type="component" value="Chromosome 16"/>
</dbReference>
<dbReference type="RNAct" id="P17023">
    <property type="molecule type" value="protein"/>
</dbReference>
<dbReference type="Bgee" id="ENSG00000157429">
    <property type="expression patterns" value="Expressed in right uterine tube and 125 other cell types or tissues"/>
</dbReference>
<dbReference type="ExpressionAtlas" id="P17023">
    <property type="expression patterns" value="baseline and differential"/>
</dbReference>
<dbReference type="GO" id="GO:0005634">
    <property type="term" value="C:nucleus"/>
    <property type="evidence" value="ECO:0000318"/>
    <property type="project" value="GO_Central"/>
</dbReference>
<dbReference type="GO" id="GO:0000981">
    <property type="term" value="F:DNA-binding transcription factor activity, RNA polymerase II-specific"/>
    <property type="evidence" value="ECO:0000318"/>
    <property type="project" value="GO_Central"/>
</dbReference>
<dbReference type="GO" id="GO:0000977">
    <property type="term" value="F:RNA polymerase II transcription regulatory region sequence-specific DNA binding"/>
    <property type="evidence" value="ECO:0000318"/>
    <property type="project" value="GO_Central"/>
</dbReference>
<dbReference type="GO" id="GO:0008270">
    <property type="term" value="F:zinc ion binding"/>
    <property type="evidence" value="ECO:0007669"/>
    <property type="project" value="UniProtKB-KW"/>
</dbReference>
<dbReference type="GO" id="GO:0006357">
    <property type="term" value="P:regulation of transcription by RNA polymerase II"/>
    <property type="evidence" value="ECO:0000318"/>
    <property type="project" value="GO_Central"/>
</dbReference>
<dbReference type="CDD" id="cd07765">
    <property type="entry name" value="KRAB_A-box"/>
    <property type="match status" value="1"/>
</dbReference>
<dbReference type="FunFam" id="3.30.160.60:FF:004935">
    <property type="match status" value="1"/>
</dbReference>
<dbReference type="FunFam" id="3.30.160.60:FF:001946">
    <property type="entry name" value="Zinc finger protein 19"/>
    <property type="match status" value="1"/>
</dbReference>
<dbReference type="FunFam" id="3.30.160.60:FF:002172">
    <property type="entry name" value="Zinc finger protein 19"/>
    <property type="match status" value="1"/>
</dbReference>
<dbReference type="FunFam" id="3.30.160.60:FF:003479">
    <property type="entry name" value="Zinc finger protein 19"/>
    <property type="match status" value="1"/>
</dbReference>
<dbReference type="FunFam" id="3.30.160.60:FF:000794">
    <property type="entry name" value="zinc finger protein 2 isoform X2"/>
    <property type="match status" value="1"/>
</dbReference>
<dbReference type="FunFam" id="3.30.160.60:FF:002343">
    <property type="entry name" value="Zinc finger protein 33A"/>
    <property type="match status" value="1"/>
</dbReference>
<dbReference type="FunFam" id="3.30.160.60:FF:002402">
    <property type="entry name" value="Zinc finger protein 347"/>
    <property type="match status" value="1"/>
</dbReference>
<dbReference type="FunFam" id="3.30.160.60:FF:001498">
    <property type="entry name" value="Zinc finger protein 404"/>
    <property type="match status" value="1"/>
</dbReference>
<dbReference type="FunFam" id="3.30.160.60:FF:002004">
    <property type="entry name" value="Zinc finger protein 473"/>
    <property type="match status" value="1"/>
</dbReference>
<dbReference type="FunFam" id="3.30.160.60:FF:000737">
    <property type="entry name" value="Zinc finger protein 565"/>
    <property type="match status" value="1"/>
</dbReference>
<dbReference type="Gene3D" id="6.10.140.140">
    <property type="match status" value="1"/>
</dbReference>
<dbReference type="Gene3D" id="3.30.160.60">
    <property type="entry name" value="Classic Zinc Finger"/>
    <property type="match status" value="10"/>
</dbReference>
<dbReference type="InterPro" id="IPR050589">
    <property type="entry name" value="Ikaros_C2H2-ZF"/>
</dbReference>
<dbReference type="InterPro" id="IPR001909">
    <property type="entry name" value="KRAB"/>
</dbReference>
<dbReference type="InterPro" id="IPR036051">
    <property type="entry name" value="KRAB_dom_sf"/>
</dbReference>
<dbReference type="InterPro" id="IPR036236">
    <property type="entry name" value="Znf_C2H2_sf"/>
</dbReference>
<dbReference type="InterPro" id="IPR013087">
    <property type="entry name" value="Znf_C2H2_type"/>
</dbReference>
<dbReference type="PANTHER" id="PTHR24404:SF114">
    <property type="entry name" value="KLUMPFUSS, ISOFORM B-RELATED"/>
    <property type="match status" value="1"/>
</dbReference>
<dbReference type="PANTHER" id="PTHR24404">
    <property type="entry name" value="ZINC FINGER PROTEIN"/>
    <property type="match status" value="1"/>
</dbReference>
<dbReference type="Pfam" id="PF01352">
    <property type="entry name" value="KRAB"/>
    <property type="match status" value="1"/>
</dbReference>
<dbReference type="Pfam" id="PF00096">
    <property type="entry name" value="zf-C2H2"/>
    <property type="match status" value="9"/>
</dbReference>
<dbReference type="SMART" id="SM00349">
    <property type="entry name" value="KRAB"/>
    <property type="match status" value="1"/>
</dbReference>
<dbReference type="SMART" id="SM00355">
    <property type="entry name" value="ZnF_C2H2"/>
    <property type="match status" value="9"/>
</dbReference>
<dbReference type="SUPFAM" id="SSF57667">
    <property type="entry name" value="beta-beta-alpha zinc fingers"/>
    <property type="match status" value="5"/>
</dbReference>
<dbReference type="SUPFAM" id="SSF109640">
    <property type="entry name" value="KRAB domain (Kruppel-associated box)"/>
    <property type="match status" value="1"/>
</dbReference>
<dbReference type="PROSITE" id="PS50805">
    <property type="entry name" value="KRAB"/>
    <property type="match status" value="1"/>
</dbReference>
<dbReference type="PROSITE" id="PS00028">
    <property type="entry name" value="ZINC_FINGER_C2H2_1"/>
    <property type="match status" value="9"/>
</dbReference>
<dbReference type="PROSITE" id="PS50157">
    <property type="entry name" value="ZINC_FINGER_C2H2_2"/>
    <property type="match status" value="10"/>
</dbReference>
<protein>
    <recommendedName>
        <fullName>Zinc finger protein 19</fullName>
    </recommendedName>
    <alternativeName>
        <fullName>Zinc finger protein KOX12</fullName>
    </alternativeName>
</protein>
<comment type="function">
    <text>May be involved in transcriptional regulation.</text>
</comment>
<comment type="interaction">
    <interactant intactId="EBI-12884200">
        <id>P17023</id>
    </interactant>
    <interactant intactId="EBI-541426">
        <id>Q9BXS5</id>
        <label>AP1M1</label>
    </interactant>
    <organismsDiffer>false</organismsDiffer>
    <experiments>3</experiments>
</comment>
<comment type="interaction">
    <interactant intactId="EBI-12884200">
        <id>P17023</id>
    </interactant>
    <interactant intactId="EBI-1166928">
        <id>Q8N5M1</id>
        <label>ATPAF2</label>
    </interactant>
    <organismsDiffer>false</organismsDiffer>
    <experiments>3</experiments>
</comment>
<comment type="interaction">
    <interactant intactId="EBI-12884200">
        <id>P17023</id>
    </interactant>
    <interactant intactId="EBI-711154">
        <id>Q9P287</id>
        <label>BCCIP</label>
    </interactant>
    <organismsDiffer>false</organismsDiffer>
    <experiments>3</experiments>
</comment>
<comment type="interaction">
    <interactant intactId="EBI-12884200">
        <id>P17023</id>
    </interactant>
    <interactant intactId="EBI-745073">
        <id>Q9BXY8</id>
        <label>BEX2</label>
    </interactant>
    <organismsDiffer>false</organismsDiffer>
    <experiments>3</experiments>
</comment>
<comment type="interaction">
    <interactant intactId="EBI-12884200">
        <id>P17023</id>
    </interactant>
    <interactant intactId="EBI-11530605">
        <id>Q9H257-2</id>
        <label>CARD9</label>
    </interactant>
    <organismsDiffer>false</organismsDiffer>
    <experiments>3</experiments>
</comment>
<comment type="interaction">
    <interactant intactId="EBI-12884200">
        <id>P17023</id>
    </interactant>
    <interactant intactId="EBI-11063830">
        <id>Q86X02</id>
        <label>CDR2L</label>
    </interactant>
    <organismsDiffer>false</organismsDiffer>
    <experiments>3</experiments>
</comment>
<comment type="interaction">
    <interactant intactId="EBI-12884200">
        <id>P17023</id>
    </interactant>
    <interactant intactId="EBI-10292696">
        <id>Q96Q77</id>
        <label>CIB3</label>
    </interactant>
    <organismsDiffer>false</organismsDiffer>
    <experiments>3</experiments>
</comment>
<comment type="interaction">
    <interactant intactId="EBI-12884200">
        <id>P17023</id>
    </interactant>
    <interactant intactId="EBI-739784">
        <id>Q9BW66</id>
        <label>CINP</label>
    </interactant>
    <organismsDiffer>false</organismsDiffer>
    <experiments>3</experiments>
</comment>
<comment type="interaction">
    <interactant intactId="EBI-12884200">
        <id>P17023</id>
    </interactant>
    <interactant intactId="EBI-348169">
        <id>P67870</id>
        <label>CSNK2B</label>
    </interactant>
    <organismsDiffer>false</organismsDiffer>
    <experiments>3</experiments>
</comment>
<comment type="interaction">
    <interactant intactId="EBI-12884200">
        <id>P17023</id>
    </interactant>
    <interactant intactId="EBI-11962928">
        <id>Q9UI47-2</id>
        <label>CTNNA3</label>
    </interactant>
    <organismsDiffer>false</organismsDiffer>
    <experiments>3</experiments>
</comment>
<comment type="interaction">
    <interactant intactId="EBI-12884200">
        <id>P17023</id>
    </interactant>
    <interactant intactId="EBI-18397873">
        <id>Q6L9T8</id>
        <label>FAM72D</label>
    </interactant>
    <organismsDiffer>false</organismsDiffer>
    <experiments>3</experiments>
</comment>
<comment type="interaction">
    <interactant intactId="EBI-12884200">
        <id>P17023</id>
    </interactant>
    <interactant intactId="EBI-744302">
        <id>P14136</id>
        <label>GFAP</label>
    </interactant>
    <organismsDiffer>false</organismsDiffer>
    <experiments>3</experiments>
</comment>
<comment type="interaction">
    <interactant intactId="EBI-12884200">
        <id>P17023</id>
    </interactant>
    <interactant intactId="EBI-748420">
        <id>Q9NSC5</id>
        <label>HOMER3</label>
    </interactant>
    <organismsDiffer>false</organismsDiffer>
    <experiments>3</experiments>
</comment>
<comment type="interaction">
    <interactant intactId="EBI-12884200">
        <id>P17023</id>
    </interactant>
    <interactant intactId="EBI-466029">
        <id>P42858</id>
        <label>HTT</label>
    </interactant>
    <organismsDiffer>false</organismsDiffer>
    <experiments>3</experiments>
</comment>
<comment type="interaction">
    <interactant intactId="EBI-12884200">
        <id>P17023</id>
    </interactant>
    <interactant intactId="EBI-1055254">
        <id>Q8WXH2</id>
        <label>JPH3</label>
    </interactant>
    <organismsDiffer>false</organismsDiffer>
    <experiments>3</experiments>
</comment>
<comment type="interaction">
    <interactant intactId="EBI-12884200">
        <id>P17023</id>
    </interactant>
    <interactant intactId="EBI-8639312">
        <id>P25800</id>
        <label>LMO1</label>
    </interactant>
    <organismsDiffer>false</organismsDiffer>
    <experiments>3</experiments>
</comment>
<comment type="interaction">
    <interactant intactId="EBI-12884200">
        <id>P17023</id>
    </interactant>
    <interactant intactId="EBI-11959475">
        <id>P25791-3</id>
        <label>LMO2</label>
    </interactant>
    <organismsDiffer>false</organismsDiffer>
    <experiments>3</experiments>
</comment>
<comment type="interaction">
    <interactant intactId="EBI-12884200">
        <id>P17023</id>
    </interactant>
    <interactant intactId="EBI-746778">
        <id>Q96A72</id>
        <label>MAGOHB</label>
    </interactant>
    <organismsDiffer>false</organismsDiffer>
    <experiments>3</experiments>
</comment>
<comment type="interaction">
    <interactant intactId="EBI-12884200">
        <id>P17023</id>
    </interactant>
    <interactant intactId="EBI-1246261">
        <id>O14561</id>
        <label>NDUFAB1</label>
    </interactant>
    <organismsDiffer>false</organismsDiffer>
    <experiments>3</experiments>
</comment>
<comment type="interaction">
    <interactant intactId="EBI-12884200">
        <id>P17023</id>
    </interactant>
    <interactant intactId="EBI-713665">
        <id>P19404</id>
        <label>NDUFV2</label>
    </interactant>
    <organismsDiffer>false</organismsDiffer>
    <experiments>3</experiments>
</comment>
<comment type="interaction">
    <interactant intactId="EBI-12884200">
        <id>P17023</id>
    </interactant>
    <interactant intactId="EBI-10297093">
        <id>Q9BRQ3</id>
        <label>NUDT22</label>
    </interactant>
    <organismsDiffer>false</organismsDiffer>
    <experiments>3</experiments>
</comment>
<comment type="interaction">
    <interactant intactId="EBI-12884200">
        <id>P17023</id>
    </interactant>
    <interactant intactId="EBI-712376">
        <id>P40937</id>
        <label>RFC5</label>
    </interactant>
    <organismsDiffer>false</organismsDiffer>
    <experiments>5</experiments>
</comment>
<comment type="interaction">
    <interactant intactId="EBI-12884200">
        <id>P17023</id>
    </interactant>
    <interactant intactId="EBI-748391">
        <id>Q9BWG6</id>
        <label>SCNM1</label>
    </interactant>
    <organismsDiffer>false</organismsDiffer>
    <experiments>3</experiments>
</comment>
<comment type="interaction">
    <interactant intactId="EBI-12884200">
        <id>P17023</id>
    </interactant>
    <interactant intactId="EBI-12023934">
        <id>Q5MJ10</id>
        <label>SPANXN2</label>
    </interactant>
    <organismsDiffer>false</organismsDiffer>
    <experiments>3</experiments>
</comment>
<comment type="interaction">
    <interactant intactId="EBI-12884200">
        <id>P17023</id>
    </interactant>
    <interactant intactId="EBI-714135">
        <id>O75558</id>
        <label>STX11</label>
    </interactant>
    <organismsDiffer>false</organismsDiffer>
    <experiments>3</experiments>
</comment>
<comment type="interaction">
    <interactant intactId="EBI-12884200">
        <id>P17023</id>
    </interactant>
    <interactant intactId="EBI-740727">
        <id>Q8TAU3</id>
        <label>ZNF417</label>
    </interactant>
    <organismsDiffer>false</organismsDiffer>
    <experiments>3</experiments>
</comment>
<comment type="subcellular location">
    <subcellularLocation>
        <location evidence="7">Nucleus</location>
    </subcellularLocation>
</comment>
<comment type="alternative products">
    <event type="alternative splicing"/>
    <isoform>
        <id>P17023-1</id>
        <name>1</name>
        <sequence type="displayed"/>
    </isoform>
    <isoform>
        <id>P17023-2</id>
        <name>2</name>
        <sequence type="described" ref="VSP_036733"/>
    </isoform>
</comment>
<comment type="similarity">
    <text evidence="7">Belongs to the krueppel C2H2-type zinc-finger protein family.</text>
</comment>
<comment type="sequence caution" evidence="7">
    <conflict type="erroneous initiation">
        <sequence resource="EMBL-CDS" id="AAA36814"/>
    </conflict>
</comment>
<sequence length="458" mass="52449">MAAMPLKAQYQEMVTFEDVAVHFTKTEWTGLSPAQRALYRSVMLENFGNLTALGYPVPKPALISLLERGDMAWGLEAQDDPPAERTKNVCKDVETNIDSESTLIQGISEERDGMMSHGQLKSVPQRTDFPETRNVEKHQDIPTVKNIQGKVPRIPCARKPFICEECGKSFSYFSYYARHQRIHTGEKPFECSECGKAFNGNSSLIRHQRIHTGERPYQCEECGRAFNDNANLIRHQRIHSGDRPYYCTECGNSFTSSSEFVIHQRIHTGEKPYECNECGKAFVGNSPLLRHQKIHTGEKPYECNECGKSFGRTSHLSQHQRIHTGEKPYSCKVCGQAFNFHTKLTRHQRIHSEEKPFDCVDCGKAFSAQEQLKRHLRIHTQESSYVCDECGKALTSKRNLHQHQRIHTGEKPYECSKYEKAFGTSSQLGHLEHVYSGEKPVLDICRFGLPEFFTPFYW</sequence>